<organism>
    <name type="scientific">Arabidopsis thaliana</name>
    <name type="common">Mouse-ear cress</name>
    <dbReference type="NCBI Taxonomy" id="3702"/>
    <lineage>
        <taxon>Eukaryota</taxon>
        <taxon>Viridiplantae</taxon>
        <taxon>Streptophyta</taxon>
        <taxon>Embryophyta</taxon>
        <taxon>Tracheophyta</taxon>
        <taxon>Spermatophyta</taxon>
        <taxon>Magnoliopsida</taxon>
        <taxon>eudicotyledons</taxon>
        <taxon>Gunneridae</taxon>
        <taxon>Pentapetalae</taxon>
        <taxon>rosids</taxon>
        <taxon>malvids</taxon>
        <taxon>Brassicales</taxon>
        <taxon>Brassicaceae</taxon>
        <taxon>Camelineae</taxon>
        <taxon>Arabidopsis</taxon>
    </lineage>
</organism>
<sequence length="482" mass="53514">MASRTTPSRSTPSRSTPSGSSSGGRTRVGKYELGRTLGEGTFAKVKFARNVENGDNVAIKVIDKEKVLKNKMIAQIKREISTMKLIKHPNVIRMFEVMASKTKIYFVLEFVTGGELFDKISSNGRLKEDEARKYFQQLINAVDYCHSRGVYHRDLKPENLLLDANGALKVSDFGLSALPQQVREDGLLHTTCGTPNYVAPEVINNKGYDGAKADLWSCGVILFVLMAGYLPFEDSNLTSLYKKIFKAEFTCPPWFSASAKKLIKRILDPNPATRITFAEVIENEWFKKGYKAPKFENADVSLDDVDAIFDDSGESKNLVVERREEGLKTPVTMNAFELISTSQGLNLGSLFEKQMGLVKRKTRFTSKSSANEIVTKIEAAAAPMGFDVKTNNYKMKLTGEKSGRKGQLAVATEVFQVAPSLYMVEMRKSGGDTLEFHKFYKNLTTGLKDIVWKTIDEEKEEGTDGGGTNGAMANRTIAKQST</sequence>
<gene>
    <name type="primary">CIPK23</name>
    <name type="synonym">LKS1</name>
    <name type="synonym">PKS17</name>
    <name type="synonym">SnRK3.23</name>
    <name type="ordered locus">At1g30270</name>
    <name type="ORF">F12P21.6</name>
</gene>
<keyword id="KW-0002">3D-structure</keyword>
<keyword id="KW-0067">ATP-binding</keyword>
<keyword id="KW-1003">Cell membrane</keyword>
<keyword id="KW-0407">Ion channel</keyword>
<keyword id="KW-0406">Ion transport</keyword>
<keyword id="KW-0418">Kinase</keyword>
<keyword id="KW-0464">Manganese</keyword>
<keyword id="KW-0472">Membrane</keyword>
<keyword id="KW-0547">Nucleotide-binding</keyword>
<keyword id="KW-0597">Phosphoprotein</keyword>
<keyword id="KW-0630">Potassium</keyword>
<keyword id="KW-0631">Potassium channel</keyword>
<keyword id="KW-0633">Potassium transport</keyword>
<keyword id="KW-1185">Reference proteome</keyword>
<keyword id="KW-0723">Serine/threonine-protein kinase</keyword>
<keyword id="KW-0808">Transferase</keyword>
<keyword id="KW-0813">Transport</keyword>
<name>CIPKN_ARATH</name>
<comment type="function">
    <text evidence="9 10 11 12 13 14">CIPK serine-threonine protein kinases interact with CBL proteins. Binding of a CBL protein to the regulatory NAF domain of CIPK protein leads to activation of the kinase in a calcium-dependent manner. Downstream of CBL1, CBL2, CBL3 and CBL9, regulates by phosphorylation the K(+) conductance and uptake of AKT1 in low K(+) condition, in response to calcium signaling and during the stomatal opening regulation by monitoring the turgor pressure in guard cells. In response to low nitrate concentration, phosphorylates NRT1.1, switching it from a low-affinity nitrate transporter to a high-affinity transporter. Confers tolerance to low potassium conditions. Involved in drought sensitivity and leaf transpiration.</text>
</comment>
<comment type="catalytic activity">
    <reaction evidence="14">
        <text>L-seryl-[protein] + ATP = O-phospho-L-seryl-[protein] + ADP + H(+)</text>
        <dbReference type="Rhea" id="RHEA:17989"/>
        <dbReference type="Rhea" id="RHEA-COMP:9863"/>
        <dbReference type="Rhea" id="RHEA-COMP:11604"/>
        <dbReference type="ChEBI" id="CHEBI:15378"/>
        <dbReference type="ChEBI" id="CHEBI:29999"/>
        <dbReference type="ChEBI" id="CHEBI:30616"/>
        <dbReference type="ChEBI" id="CHEBI:83421"/>
        <dbReference type="ChEBI" id="CHEBI:456216"/>
        <dbReference type="EC" id="2.7.11.1"/>
    </reaction>
</comment>
<comment type="catalytic activity">
    <reaction evidence="14">
        <text>L-threonyl-[protein] + ATP = O-phospho-L-threonyl-[protein] + ADP + H(+)</text>
        <dbReference type="Rhea" id="RHEA:46608"/>
        <dbReference type="Rhea" id="RHEA-COMP:11060"/>
        <dbReference type="Rhea" id="RHEA-COMP:11605"/>
        <dbReference type="ChEBI" id="CHEBI:15378"/>
        <dbReference type="ChEBI" id="CHEBI:30013"/>
        <dbReference type="ChEBI" id="CHEBI:30616"/>
        <dbReference type="ChEBI" id="CHEBI:61977"/>
        <dbReference type="ChEBI" id="CHEBI:456216"/>
        <dbReference type="EC" id="2.7.11.1"/>
    </reaction>
</comment>
<comment type="cofactor">
    <cofactor evidence="14">
        <name>Mn(2+)</name>
        <dbReference type="ChEBI" id="CHEBI:29035"/>
    </cofactor>
</comment>
<comment type="biophysicochemical properties">
    <kinetics>
        <KM evidence="14">43.2 uM for synthetic substrate</KM>
        <Vmax evidence="14">147.7 pmol/min/mg enzyme</Vmax>
    </kinetics>
</comment>
<comment type="subunit">
    <text evidence="8 9 10 11 12 13">Part of a K(+)-channel calcium-sensing kinase/phosphatase complex composed by a calcium sensor CBL (CBL1, CBL2, CBL3 or CBL9), a kinase CIPK (CIPK6, CIPK16 or CIPK23), a phosphatase PP2C (AIP1) and a K(+)-channel (AKT1). Interacts with AKT1, CBL1, CBL2, CBL3, CBL5, CBL8, CBL9 and NRT1.1.</text>
</comment>
<comment type="interaction">
    <interactant intactId="EBI-974277">
        <id>Q93VD3</id>
    </interactant>
    <interactant intactId="EBI-974289">
        <id>Q38998</id>
        <label>AKT1</label>
    </interactant>
    <organismsDiffer>false</organismsDiffer>
    <experiments>6</experiments>
</comment>
<comment type="interaction">
    <interactant intactId="EBI-974277">
        <id>Q93VD3</id>
    </interactant>
    <interactant intactId="EBI-974530">
        <id>O81445</id>
        <label>CBL1</label>
    </interactant>
    <organismsDiffer>false</organismsDiffer>
    <experiments>6</experiments>
</comment>
<comment type="interaction">
    <interactant intactId="EBI-974277">
        <id>Q93VD3</id>
    </interactant>
    <interactant intactId="EBI-637381">
        <id>Q9LTB8</id>
        <label>CBL9</label>
    </interactant>
    <organismsDiffer>false</organismsDiffer>
    <experiments>13</experiments>
</comment>
<comment type="interaction">
    <interactant intactId="EBI-974277">
        <id>Q93VD3</id>
    </interactant>
    <interactant intactId="EBI-2463703">
        <id>Q05085</id>
        <label>NPF6.3</label>
    </interactant>
    <organismsDiffer>false</organismsDiffer>
    <experiments>3</experiments>
</comment>
<comment type="subcellular location">
    <subcellularLocation>
        <location evidence="9 12">Cell membrane</location>
        <topology evidence="9 12">Peripheral membrane protein</topology>
    </subcellularLocation>
    <text>Associated to the plasma membrane when associated with AKT1, CBL1 and CBL9.</text>
</comment>
<comment type="tissue specificity">
    <text evidence="9 12">In seedlings, mostly in vascular bundles, and in roots, especially in cortex and endodermis cells. In adult plants, mostly expressed in flowers, and, to a lower extent, in roots, leaves, stems and siliques, particularly in vascular tissues. Also detected in guard cells and root hairs.</text>
</comment>
<comment type="induction">
    <text evidence="9 12 13">In roots under low K(+) conditions and transiently by nitrate.</text>
</comment>
<comment type="domain">
    <text evidence="1">The activation loop within the kinase domain is the target of phosphorylation/activation by upstream protein kinases. The PPI motif mediates the interaction with the ABI (abscisic acid-insensitive) phosphatases (By similarity).</text>
</comment>
<comment type="PTM">
    <text evidence="14">Autophosphorylated.</text>
</comment>
<comment type="disruption phenotype">
    <text evidence="12">Plants exhibit an increased drought tolerance and an enhanced sensitivity to abscisic acid (ABA) during the stomatal regulation.</text>
</comment>
<comment type="similarity">
    <text evidence="15">Belongs to the protein kinase superfamily. CAMK Ser/Thr protein kinase family. SNF1 subfamily.</text>
</comment>
<comment type="sequence caution" evidence="15">
    <conflict type="erroneous gene model prediction">
        <sequence resource="EMBL-CDS" id="AAG50566"/>
    </conflict>
</comment>
<protein>
    <recommendedName>
        <fullName>CBL-interacting serine/threonine-protein kinase 23</fullName>
        <ecNumber>2.7.11.1</ecNumber>
    </recommendedName>
    <alternativeName>
        <fullName>Protein LOW-K(+)-SENSITIVE 1</fullName>
    </alternativeName>
    <alternativeName>
        <fullName>SNF1-related kinase 3.23</fullName>
    </alternativeName>
    <alternativeName>
        <fullName>SOS2-like protein kinase PKS17</fullName>
    </alternativeName>
</protein>
<reference key="1">
    <citation type="submission" date="2001-05" db="EMBL/GenBank/DDBJ databases">
        <title>Molecular characterization of the CIPK gene family from Arabidopsis thaliana.</title>
        <authorList>
            <person name="Weinl S."/>
            <person name="Albrecht V."/>
            <person name="Kudla J."/>
        </authorList>
    </citation>
    <scope>NUCLEOTIDE SEQUENCE [MRNA]</scope>
</reference>
<reference key="2">
    <citation type="journal article" date="2000" name="Nature">
        <title>Sequence and analysis of chromosome 1 of the plant Arabidopsis thaliana.</title>
        <authorList>
            <person name="Theologis A."/>
            <person name="Ecker J.R."/>
            <person name="Palm C.J."/>
            <person name="Federspiel N.A."/>
            <person name="Kaul S."/>
            <person name="White O."/>
            <person name="Alonso J."/>
            <person name="Altafi H."/>
            <person name="Araujo R."/>
            <person name="Bowman C.L."/>
            <person name="Brooks S.Y."/>
            <person name="Buehler E."/>
            <person name="Chan A."/>
            <person name="Chao Q."/>
            <person name="Chen H."/>
            <person name="Cheuk R.F."/>
            <person name="Chin C.W."/>
            <person name="Chung M.K."/>
            <person name="Conn L."/>
            <person name="Conway A.B."/>
            <person name="Conway A.R."/>
            <person name="Creasy T.H."/>
            <person name="Dewar K."/>
            <person name="Dunn P."/>
            <person name="Etgu P."/>
            <person name="Feldblyum T.V."/>
            <person name="Feng J.-D."/>
            <person name="Fong B."/>
            <person name="Fujii C.Y."/>
            <person name="Gill J.E."/>
            <person name="Goldsmith A.D."/>
            <person name="Haas B."/>
            <person name="Hansen N.F."/>
            <person name="Hughes B."/>
            <person name="Huizar L."/>
            <person name="Hunter J.L."/>
            <person name="Jenkins J."/>
            <person name="Johnson-Hopson C."/>
            <person name="Khan S."/>
            <person name="Khaykin E."/>
            <person name="Kim C.J."/>
            <person name="Koo H.L."/>
            <person name="Kremenetskaia I."/>
            <person name="Kurtz D.B."/>
            <person name="Kwan A."/>
            <person name="Lam B."/>
            <person name="Langin-Hooper S."/>
            <person name="Lee A."/>
            <person name="Lee J.M."/>
            <person name="Lenz C.A."/>
            <person name="Li J.H."/>
            <person name="Li Y.-P."/>
            <person name="Lin X."/>
            <person name="Liu S.X."/>
            <person name="Liu Z.A."/>
            <person name="Luros J.S."/>
            <person name="Maiti R."/>
            <person name="Marziali A."/>
            <person name="Militscher J."/>
            <person name="Miranda M."/>
            <person name="Nguyen M."/>
            <person name="Nierman W.C."/>
            <person name="Osborne B.I."/>
            <person name="Pai G."/>
            <person name="Peterson J."/>
            <person name="Pham P.K."/>
            <person name="Rizzo M."/>
            <person name="Rooney T."/>
            <person name="Rowley D."/>
            <person name="Sakano H."/>
            <person name="Salzberg S.L."/>
            <person name="Schwartz J.R."/>
            <person name="Shinn P."/>
            <person name="Southwick A.M."/>
            <person name="Sun H."/>
            <person name="Tallon L.J."/>
            <person name="Tambunga G."/>
            <person name="Toriumi M.J."/>
            <person name="Town C.D."/>
            <person name="Utterback T."/>
            <person name="Van Aken S."/>
            <person name="Vaysberg M."/>
            <person name="Vysotskaia V.S."/>
            <person name="Walker M."/>
            <person name="Wu D."/>
            <person name="Yu G."/>
            <person name="Fraser C.M."/>
            <person name="Venter J.C."/>
            <person name="Davis R.W."/>
        </authorList>
    </citation>
    <scope>NUCLEOTIDE SEQUENCE [LARGE SCALE GENOMIC DNA]</scope>
    <source>
        <strain>cv. Columbia</strain>
    </source>
</reference>
<reference key="3">
    <citation type="journal article" date="2017" name="Plant J.">
        <title>Araport11: a complete reannotation of the Arabidopsis thaliana reference genome.</title>
        <authorList>
            <person name="Cheng C.Y."/>
            <person name="Krishnakumar V."/>
            <person name="Chan A.P."/>
            <person name="Thibaud-Nissen F."/>
            <person name="Schobel S."/>
            <person name="Town C.D."/>
        </authorList>
    </citation>
    <scope>GENOME REANNOTATION</scope>
    <source>
        <strain>cv. Columbia</strain>
    </source>
</reference>
<reference key="4">
    <citation type="journal article" date="2003" name="Science">
        <title>Empirical analysis of transcriptional activity in the Arabidopsis genome.</title>
        <authorList>
            <person name="Yamada K."/>
            <person name="Lim J."/>
            <person name="Dale J.M."/>
            <person name="Chen H."/>
            <person name="Shinn P."/>
            <person name="Palm C.J."/>
            <person name="Southwick A.M."/>
            <person name="Wu H.C."/>
            <person name="Kim C.J."/>
            <person name="Nguyen M."/>
            <person name="Pham P.K."/>
            <person name="Cheuk R.F."/>
            <person name="Karlin-Newmann G."/>
            <person name="Liu S.X."/>
            <person name="Lam B."/>
            <person name="Sakano H."/>
            <person name="Wu T."/>
            <person name="Yu G."/>
            <person name="Miranda M."/>
            <person name="Quach H.L."/>
            <person name="Tripp M."/>
            <person name="Chang C.H."/>
            <person name="Lee J.M."/>
            <person name="Toriumi M.J."/>
            <person name="Chan M.M."/>
            <person name="Tang C.C."/>
            <person name="Onodera C.S."/>
            <person name="Deng J.M."/>
            <person name="Akiyama K."/>
            <person name="Ansari Y."/>
            <person name="Arakawa T."/>
            <person name="Banh J."/>
            <person name="Banno F."/>
            <person name="Bowser L."/>
            <person name="Brooks S.Y."/>
            <person name="Carninci P."/>
            <person name="Chao Q."/>
            <person name="Choy N."/>
            <person name="Enju A."/>
            <person name="Goldsmith A.D."/>
            <person name="Gurjal M."/>
            <person name="Hansen N.F."/>
            <person name="Hayashizaki Y."/>
            <person name="Johnson-Hopson C."/>
            <person name="Hsuan V.W."/>
            <person name="Iida K."/>
            <person name="Karnes M."/>
            <person name="Khan S."/>
            <person name="Koesema E."/>
            <person name="Ishida J."/>
            <person name="Jiang P.X."/>
            <person name="Jones T."/>
            <person name="Kawai J."/>
            <person name="Kamiya A."/>
            <person name="Meyers C."/>
            <person name="Nakajima M."/>
            <person name="Narusaka M."/>
            <person name="Seki M."/>
            <person name="Sakurai T."/>
            <person name="Satou M."/>
            <person name="Tamse R."/>
            <person name="Vaysberg M."/>
            <person name="Wallender E.K."/>
            <person name="Wong C."/>
            <person name="Yamamura Y."/>
            <person name="Yuan S."/>
            <person name="Shinozaki K."/>
            <person name="Davis R.W."/>
            <person name="Theologis A."/>
            <person name="Ecker J.R."/>
        </authorList>
    </citation>
    <scope>NUCLEOTIDE SEQUENCE [LARGE SCALE MRNA]</scope>
    <source>
        <strain>cv. Columbia</strain>
    </source>
</reference>
<reference key="5">
    <citation type="journal article" date="2003" name="Plant Physiol.">
        <title>The Arabidopsis CDPK-SnRK superfamily of protein kinases.</title>
        <authorList>
            <person name="Hrabak E.M."/>
            <person name="Chan C.W.M."/>
            <person name="Gribskov M."/>
            <person name="Harper J.F."/>
            <person name="Choi J.H."/>
            <person name="Halford N."/>
            <person name="Kudla J."/>
            <person name="Luan S."/>
            <person name="Nimmo H.G."/>
            <person name="Sussman M.R."/>
            <person name="Thomas M."/>
            <person name="Walker-Simmons K."/>
            <person name="Zhu J.-K."/>
            <person name="Harmon A.C."/>
        </authorList>
    </citation>
    <scope>GENE FAMILY</scope>
    <scope>NOMENCLATURE</scope>
</reference>
<reference key="6">
    <citation type="journal article" date="2004" name="Plant Physiol.">
        <title>Calcium sensors and their interacting protein kinases: genomics of the Arabidopsis and rice CBL-CIPK signaling networks.</title>
        <authorList>
            <person name="Kolukisaoglu U."/>
            <person name="Weinl S."/>
            <person name="Blazevic D."/>
            <person name="Batistic O."/>
            <person name="Kudla J."/>
        </authorList>
    </citation>
    <scope>INTERACTION WITH CBL9</scope>
</reference>
<reference key="7">
    <citation type="journal article" date="2006" name="Cell">
        <title>Calcium signaling networks channel plant K+ uptake.</title>
        <authorList>
            <person name="Hedrich R."/>
            <person name="Kudla J."/>
        </authorList>
    </citation>
    <scope>REVIEW</scope>
</reference>
<reference key="8">
    <citation type="journal article" date="2006" name="Cell">
        <title>A protein kinase, interacting with two calcineurin B-like proteins, regulates K+ transporter AKT1 in Arabidopsis.</title>
        <authorList>
            <person name="Xu J."/>
            <person name="Li H.-D."/>
            <person name="Chen L.-Q."/>
            <person name="Wang Y."/>
            <person name="Liu L.-L."/>
            <person name="He L."/>
            <person name="Wu W.-H."/>
        </authorList>
    </citation>
    <scope>FUNCTION</scope>
    <scope>MUTAGENESIS OF ALA-199 AND LEU-447</scope>
    <scope>INTERACTION WITH AKT1; CBL1; CBL2; CBL3; CBL5; CBL8 AND CBL9</scope>
    <scope>TISSUE SPECIFICITY</scope>
    <scope>INDUCTION</scope>
    <scope>SUBCELLULAR LOCATION</scope>
</reference>
<reference key="9">
    <citation type="journal article" date="2006" name="Proc. Natl. Acad. Sci. U.S.A.">
        <title>A Ca(2)+ signaling pathway regulates a K(+) channel for low-K response in Arabidopsis.</title>
        <authorList>
            <person name="Li L."/>
            <person name="Kim B.-G."/>
            <person name="Cheong Y.H."/>
            <person name="Pandey G.K."/>
            <person name="Luan S."/>
        </authorList>
    </citation>
    <scope>FUNCTION</scope>
    <scope>INTERACTION WITH AKT1</scope>
    <scope>AUTOPHOSPHORYLATION</scope>
</reference>
<reference key="10">
    <citation type="journal article" date="2007" name="Plant J.">
        <title>Two calcineurin B-like calcium sensors, interacting with protein kinase CIPK23, regulate leaf transpiration and root potassium uptake in Arabidopsis.</title>
        <authorList>
            <person name="Cheong Y.H."/>
            <person name="Pandey G.K."/>
            <person name="Grant J.J."/>
            <person name="Batistic O."/>
            <person name="Li L."/>
            <person name="Kim B.-G."/>
            <person name="Lee S.-C."/>
            <person name="Kudla J."/>
            <person name="Luan S."/>
        </authorList>
    </citation>
    <scope>FUNCTION</scope>
    <scope>INTERACTION WITH CBL1 AND CBL9</scope>
    <scope>TISSUE SPECIFICITY</scope>
    <scope>INDUCTION</scope>
    <scope>SUBCELLULAR LOCATION</scope>
    <scope>DISRUPTION PHENOTYPE</scope>
</reference>
<reference key="11">
    <citation type="journal article" date="2007" name="Proc. Natl. Acad. Sci. U.S.A.">
        <title>A protein phosphorylation/dephosphorylation network regulates a plant potassium channel.</title>
        <authorList>
            <person name="Lee S.-C."/>
            <person name="Lan W.-Z."/>
            <person name="Kim B.-G."/>
            <person name="Li L."/>
            <person name="Cheong Y.H."/>
            <person name="Pandey G.K."/>
            <person name="Lu G."/>
            <person name="Buchanan B.B."/>
            <person name="Luan S."/>
        </authorList>
    </citation>
    <scope>FUNCTION</scope>
    <scope>INTERACTION WITH AKT1; CBL1; CBL2; CBL3 AND CBL9</scope>
</reference>
<reference key="12">
    <citation type="journal article" date="2009" name="Cell">
        <title>CHL1 functions as a nitrate sensor in plants.</title>
        <authorList>
            <person name="Ho C.H."/>
            <person name="Lin S.H."/>
            <person name="Hu H.C."/>
            <person name="Tsay Y.F."/>
        </authorList>
    </citation>
    <scope>FUNCTION</scope>
    <scope>INDUCTION BY NITRATE</scope>
    <scope>INTERACTION WITH NRT1.1</scope>
</reference>
<reference key="13">
    <citation type="journal article" date="2012" name="J. Biol. Chem.">
        <title>Phosphorylation of calcineurin B-like (CBL) calcium sensor proteins by their CBL-interacting protein kinases (CIPKs) is required for full activity of CBL-CIPK complexes toward their target proteins.</title>
        <authorList>
            <person name="Hashimoto K."/>
            <person name="Eckert C."/>
            <person name="Anschuetz U."/>
            <person name="Scholz M."/>
            <person name="Held K."/>
            <person name="Waadt R."/>
            <person name="Reyer A."/>
            <person name="Hippler M."/>
            <person name="Becker D."/>
            <person name="Kudla J."/>
        </authorList>
    </citation>
    <scope>FUNCTION</scope>
    <scope>CATALYTIC ACTIVITY</scope>
    <scope>COFACTOR</scope>
    <scope>BIOPHYSICOCHEMICAL PROPERTIES</scope>
    <scope>PHOSPHORYLATION</scope>
</reference>
<dbReference type="EC" id="2.7.11.1"/>
<dbReference type="EMBL" id="AY035226">
    <property type="protein sequence ID" value="AAK61494.1"/>
    <property type="molecule type" value="mRNA"/>
</dbReference>
<dbReference type="EMBL" id="AC073506">
    <property type="protein sequence ID" value="AAG50566.1"/>
    <property type="status" value="ALT_SEQ"/>
    <property type="molecule type" value="Genomic_DNA"/>
</dbReference>
<dbReference type="EMBL" id="CP002684">
    <property type="protein sequence ID" value="AEE31201.1"/>
    <property type="molecule type" value="Genomic_DNA"/>
</dbReference>
<dbReference type="EMBL" id="AY056419">
    <property type="protein sequence ID" value="AAL08275.1"/>
    <property type="molecule type" value="mRNA"/>
</dbReference>
<dbReference type="EMBL" id="AY090322">
    <property type="protein sequence ID" value="AAL90983.1"/>
    <property type="molecule type" value="mRNA"/>
</dbReference>
<dbReference type="PIR" id="A86427">
    <property type="entry name" value="A86427"/>
</dbReference>
<dbReference type="RefSeq" id="NP_564353.1">
    <property type="nucleotide sequence ID" value="NM_102766.6"/>
</dbReference>
<dbReference type="PDB" id="4CZT">
    <property type="method" value="X-ray"/>
    <property type="resolution" value="2.30 A"/>
    <property type="chains" value="A/B/C/D=25-482"/>
</dbReference>
<dbReference type="PDB" id="4CZU">
    <property type="method" value="X-ray"/>
    <property type="resolution" value="1.90 A"/>
    <property type="chains" value="A/B/C/D=25-482"/>
</dbReference>
<dbReference type="PDBsum" id="4CZT"/>
<dbReference type="PDBsum" id="4CZU"/>
<dbReference type="SMR" id="Q93VD3"/>
<dbReference type="BioGRID" id="25142">
    <property type="interactions" value="11"/>
</dbReference>
<dbReference type="DIP" id="DIP-36761N"/>
<dbReference type="FunCoup" id="Q93VD3">
    <property type="interactions" value="2182"/>
</dbReference>
<dbReference type="IntAct" id="Q93VD3">
    <property type="interactions" value="9"/>
</dbReference>
<dbReference type="STRING" id="3702.Q93VD3"/>
<dbReference type="GlyGen" id="Q93VD3">
    <property type="glycosylation" value="2 sites"/>
</dbReference>
<dbReference type="iPTMnet" id="Q93VD3"/>
<dbReference type="PaxDb" id="3702-AT1G30270.1"/>
<dbReference type="ProteomicsDB" id="246689"/>
<dbReference type="EnsemblPlants" id="AT1G30270.1">
    <property type="protein sequence ID" value="AT1G30270.1"/>
    <property type="gene ID" value="AT1G30270"/>
</dbReference>
<dbReference type="GeneID" id="839907"/>
<dbReference type="Gramene" id="AT1G30270.1">
    <property type="protein sequence ID" value="AT1G30270.1"/>
    <property type="gene ID" value="AT1G30270"/>
</dbReference>
<dbReference type="KEGG" id="ath:AT1G30270"/>
<dbReference type="Araport" id="AT1G30270"/>
<dbReference type="TAIR" id="AT1G30270">
    <property type="gene designation" value="CIPK23"/>
</dbReference>
<dbReference type="eggNOG" id="KOG0583">
    <property type="taxonomic scope" value="Eukaryota"/>
</dbReference>
<dbReference type="HOGENOM" id="CLU_000288_59_0_1"/>
<dbReference type="InParanoid" id="Q93VD3"/>
<dbReference type="OrthoDB" id="193931at2759"/>
<dbReference type="PhylomeDB" id="Q93VD3"/>
<dbReference type="SABIO-RK" id="Q93VD3"/>
<dbReference type="CD-CODE" id="4299E36E">
    <property type="entry name" value="Nucleolus"/>
</dbReference>
<dbReference type="EvolutionaryTrace" id="Q93VD3"/>
<dbReference type="PRO" id="PR:Q93VD3"/>
<dbReference type="Proteomes" id="UP000006548">
    <property type="component" value="Chromosome 1"/>
</dbReference>
<dbReference type="ExpressionAtlas" id="Q93VD3">
    <property type="expression patterns" value="baseline and differential"/>
</dbReference>
<dbReference type="GO" id="GO:0005737">
    <property type="term" value="C:cytoplasm"/>
    <property type="evidence" value="ECO:0007005"/>
    <property type="project" value="TAIR"/>
</dbReference>
<dbReference type="GO" id="GO:0005829">
    <property type="term" value="C:cytosol"/>
    <property type="evidence" value="ECO:0000314"/>
    <property type="project" value="TAIR"/>
</dbReference>
<dbReference type="GO" id="GO:0005634">
    <property type="term" value="C:nucleus"/>
    <property type="evidence" value="ECO:0000314"/>
    <property type="project" value="TAIR"/>
</dbReference>
<dbReference type="GO" id="GO:0005886">
    <property type="term" value="C:plasma membrane"/>
    <property type="evidence" value="ECO:0000353"/>
    <property type="project" value="TAIR"/>
</dbReference>
<dbReference type="GO" id="GO:0009536">
    <property type="term" value="C:plastid"/>
    <property type="evidence" value="ECO:0007005"/>
    <property type="project" value="TAIR"/>
</dbReference>
<dbReference type="GO" id="GO:0005524">
    <property type="term" value="F:ATP binding"/>
    <property type="evidence" value="ECO:0007669"/>
    <property type="project" value="UniProtKB-KW"/>
</dbReference>
<dbReference type="GO" id="GO:0005267">
    <property type="term" value="F:potassium channel activity"/>
    <property type="evidence" value="ECO:0007669"/>
    <property type="project" value="UniProtKB-KW"/>
</dbReference>
<dbReference type="GO" id="GO:0106310">
    <property type="term" value="F:protein serine kinase activity"/>
    <property type="evidence" value="ECO:0007669"/>
    <property type="project" value="RHEA"/>
</dbReference>
<dbReference type="GO" id="GO:0004674">
    <property type="term" value="F:protein serine/threonine kinase activity"/>
    <property type="evidence" value="ECO:0000314"/>
    <property type="project" value="TAIR"/>
</dbReference>
<dbReference type="GO" id="GO:1990573">
    <property type="term" value="P:potassium ion import across plasma membrane"/>
    <property type="evidence" value="ECO:0000315"/>
    <property type="project" value="TAIR"/>
</dbReference>
<dbReference type="GO" id="GO:0010119">
    <property type="term" value="P:regulation of stomatal movement"/>
    <property type="evidence" value="ECO:0000315"/>
    <property type="project" value="TAIR"/>
</dbReference>
<dbReference type="GO" id="GO:0007584">
    <property type="term" value="P:response to nutrient"/>
    <property type="evidence" value="ECO:0000315"/>
    <property type="project" value="TAIR"/>
</dbReference>
<dbReference type="GO" id="GO:0009414">
    <property type="term" value="P:response to water deprivation"/>
    <property type="evidence" value="ECO:0000315"/>
    <property type="project" value="TAIR"/>
</dbReference>
<dbReference type="GO" id="GO:0007165">
    <property type="term" value="P:signal transduction"/>
    <property type="evidence" value="ECO:0007669"/>
    <property type="project" value="InterPro"/>
</dbReference>
<dbReference type="GO" id="GO:0010118">
    <property type="term" value="P:stomatal movement"/>
    <property type="evidence" value="ECO:0000315"/>
    <property type="project" value="TAIR"/>
</dbReference>
<dbReference type="CDD" id="cd12195">
    <property type="entry name" value="CIPK_C"/>
    <property type="match status" value="1"/>
</dbReference>
<dbReference type="CDD" id="cd14663">
    <property type="entry name" value="STKc_SnRK3"/>
    <property type="match status" value="1"/>
</dbReference>
<dbReference type="FunFam" id="1.10.510.10:FF:000279">
    <property type="entry name" value="Non-specific serine/threonine protein kinase"/>
    <property type="match status" value="1"/>
</dbReference>
<dbReference type="FunFam" id="3.30.200.20:FF:000096">
    <property type="entry name" value="Non-specific serine/threonine protein kinase"/>
    <property type="match status" value="1"/>
</dbReference>
<dbReference type="FunFam" id="3.30.310.80:FF:000002">
    <property type="entry name" value="Non-specific serine/threonine protein kinase"/>
    <property type="match status" value="1"/>
</dbReference>
<dbReference type="Gene3D" id="3.30.310.80">
    <property type="entry name" value="Kinase associated domain 1, KA1"/>
    <property type="match status" value="1"/>
</dbReference>
<dbReference type="Gene3D" id="3.30.200.20">
    <property type="entry name" value="Phosphorylase Kinase, domain 1"/>
    <property type="match status" value="1"/>
</dbReference>
<dbReference type="Gene3D" id="1.10.510.10">
    <property type="entry name" value="Transferase(Phosphotransferase) domain 1"/>
    <property type="match status" value="1"/>
</dbReference>
<dbReference type="InterPro" id="IPR011009">
    <property type="entry name" value="Kinase-like_dom_sf"/>
</dbReference>
<dbReference type="InterPro" id="IPR018451">
    <property type="entry name" value="NAF/FISL_domain"/>
</dbReference>
<dbReference type="InterPro" id="IPR004041">
    <property type="entry name" value="NAF_dom"/>
</dbReference>
<dbReference type="InterPro" id="IPR000719">
    <property type="entry name" value="Prot_kinase_dom"/>
</dbReference>
<dbReference type="InterPro" id="IPR017441">
    <property type="entry name" value="Protein_kinase_ATP_BS"/>
</dbReference>
<dbReference type="InterPro" id="IPR008271">
    <property type="entry name" value="Ser/Thr_kinase_AS"/>
</dbReference>
<dbReference type="PANTHER" id="PTHR43895">
    <property type="entry name" value="CALCIUM/CALMODULIN-DEPENDENT PROTEIN KINASE KINASE-RELATED"/>
    <property type="match status" value="1"/>
</dbReference>
<dbReference type="PANTHER" id="PTHR43895:SF123">
    <property type="entry name" value="NON-SPECIFIC SERINE_THREONINE PROTEIN KINASE"/>
    <property type="match status" value="1"/>
</dbReference>
<dbReference type="Pfam" id="PF03822">
    <property type="entry name" value="NAF"/>
    <property type="match status" value="1"/>
</dbReference>
<dbReference type="Pfam" id="PF00069">
    <property type="entry name" value="Pkinase"/>
    <property type="match status" value="1"/>
</dbReference>
<dbReference type="SMART" id="SM00220">
    <property type="entry name" value="S_TKc"/>
    <property type="match status" value="1"/>
</dbReference>
<dbReference type="SUPFAM" id="SSF56112">
    <property type="entry name" value="Protein kinase-like (PK-like)"/>
    <property type="match status" value="1"/>
</dbReference>
<dbReference type="PROSITE" id="PS50816">
    <property type="entry name" value="NAF"/>
    <property type="match status" value="1"/>
</dbReference>
<dbReference type="PROSITE" id="PS00107">
    <property type="entry name" value="PROTEIN_KINASE_ATP"/>
    <property type="match status" value="1"/>
</dbReference>
<dbReference type="PROSITE" id="PS50011">
    <property type="entry name" value="PROTEIN_KINASE_DOM"/>
    <property type="match status" value="1"/>
</dbReference>
<dbReference type="PROSITE" id="PS00108">
    <property type="entry name" value="PROTEIN_KINASE_ST"/>
    <property type="match status" value="1"/>
</dbReference>
<feature type="chain" id="PRO_0000337224" description="CBL-interacting serine/threonine-protein kinase 23">
    <location>
        <begin position="1"/>
        <end position="482"/>
    </location>
</feature>
<feature type="domain" description="Protein kinase" evidence="4">
    <location>
        <begin position="31"/>
        <end position="286"/>
    </location>
</feature>
<feature type="domain" description="NAF" evidence="5">
    <location>
        <begin position="328"/>
        <end position="352"/>
    </location>
</feature>
<feature type="region of interest" description="Disordered" evidence="7">
    <location>
        <begin position="1"/>
        <end position="29"/>
    </location>
</feature>
<feature type="region of interest" description="Activation loop" evidence="1">
    <location>
        <begin position="172"/>
        <end position="201"/>
    </location>
</feature>
<feature type="region of interest" description="PPI" evidence="1">
    <location>
        <begin position="359"/>
        <end position="388"/>
    </location>
</feature>
<feature type="region of interest" description="Disordered" evidence="7">
    <location>
        <begin position="459"/>
        <end position="482"/>
    </location>
</feature>
<feature type="compositionally biased region" description="Low complexity" evidence="7">
    <location>
        <begin position="1"/>
        <end position="25"/>
    </location>
</feature>
<feature type="active site" description="Proton acceptor" evidence="4 6">
    <location>
        <position position="154"/>
    </location>
</feature>
<feature type="binding site" evidence="4">
    <location>
        <begin position="37"/>
        <end position="45"/>
    </location>
    <ligand>
        <name>ATP</name>
        <dbReference type="ChEBI" id="CHEBI:30616"/>
    </ligand>
</feature>
<feature type="binding site" evidence="4">
    <location>
        <position position="60"/>
    </location>
    <ligand>
        <name>ATP</name>
        <dbReference type="ChEBI" id="CHEBI:30616"/>
    </ligand>
</feature>
<feature type="modified residue" description="Phosphoserine" evidence="3">
    <location>
        <position position="176"/>
    </location>
</feature>
<feature type="modified residue" description="Phosphothreonine" evidence="2">
    <location>
        <position position="190"/>
    </location>
</feature>
<feature type="mutagenesis site" description="In lks1-1; enhanced sensitivity to low K(+)." evidence="9">
    <original>A</original>
    <variation>V</variation>
    <location>
        <position position="199"/>
    </location>
</feature>
<feature type="mutagenesis site" description="In lks1-2; enhanced sensitivity to low K(+)." evidence="9">
    <original>L</original>
    <variation>F</variation>
    <location>
        <position position="447"/>
    </location>
</feature>
<feature type="strand" evidence="16">
    <location>
        <begin position="25"/>
        <end position="28"/>
    </location>
</feature>
<feature type="strand" evidence="16">
    <location>
        <begin position="31"/>
        <end position="39"/>
    </location>
</feature>
<feature type="strand" evidence="16">
    <location>
        <begin position="41"/>
        <end position="50"/>
    </location>
</feature>
<feature type="turn" evidence="16">
    <location>
        <begin position="51"/>
        <end position="53"/>
    </location>
</feature>
<feature type="strand" evidence="16">
    <location>
        <begin position="56"/>
        <end position="63"/>
    </location>
</feature>
<feature type="helix" evidence="16">
    <location>
        <begin position="64"/>
        <end position="68"/>
    </location>
</feature>
<feature type="helix" evidence="16">
    <location>
        <begin position="73"/>
        <end position="85"/>
    </location>
</feature>
<feature type="strand" evidence="16">
    <location>
        <begin position="94"/>
        <end position="99"/>
    </location>
</feature>
<feature type="strand" evidence="16">
    <location>
        <begin position="101"/>
        <end position="108"/>
    </location>
</feature>
<feature type="helix" evidence="16">
    <location>
        <begin position="117"/>
        <end position="123"/>
    </location>
</feature>
<feature type="helix" evidence="16">
    <location>
        <begin position="128"/>
        <end position="147"/>
    </location>
</feature>
<feature type="helix" evidence="16">
    <location>
        <begin position="157"/>
        <end position="159"/>
    </location>
</feature>
<feature type="strand" evidence="16">
    <location>
        <begin position="160"/>
        <end position="162"/>
    </location>
</feature>
<feature type="strand" evidence="16">
    <location>
        <begin position="168"/>
        <end position="170"/>
    </location>
</feature>
<feature type="helix" evidence="16">
    <location>
        <begin position="175"/>
        <end position="177"/>
    </location>
</feature>
<feature type="helix" evidence="16">
    <location>
        <begin position="180"/>
        <end position="183"/>
    </location>
</feature>
<feature type="strand" evidence="16">
    <location>
        <begin position="186"/>
        <end position="189"/>
    </location>
</feature>
<feature type="helix" evidence="16">
    <location>
        <begin position="195"/>
        <end position="197"/>
    </location>
</feature>
<feature type="helix" evidence="16">
    <location>
        <begin position="200"/>
        <end position="203"/>
    </location>
</feature>
<feature type="helix" evidence="16">
    <location>
        <begin position="210"/>
        <end position="227"/>
    </location>
</feature>
<feature type="helix" evidence="16">
    <location>
        <begin position="237"/>
        <end position="246"/>
    </location>
</feature>
<feature type="helix" evidence="16">
    <location>
        <begin position="257"/>
        <end position="266"/>
    </location>
</feature>
<feature type="turn" evidence="16">
    <location>
        <begin position="271"/>
        <end position="273"/>
    </location>
</feature>
<feature type="helix" evidence="16">
    <location>
        <begin position="277"/>
        <end position="281"/>
    </location>
</feature>
<feature type="turn" evidence="16">
    <location>
        <begin position="284"/>
        <end position="289"/>
    </location>
</feature>
<feature type="helix" evidence="16">
    <location>
        <begin position="305"/>
        <end position="307"/>
    </location>
</feature>
<accession>Q93VD3</accession>
<accession>Q9C753</accession>
<proteinExistence type="evidence at protein level"/>
<evidence type="ECO:0000250" key="1"/>
<evidence type="ECO:0000250" key="2">
    <source>
        <dbReference type="UniProtKB" id="Q38997"/>
    </source>
</evidence>
<evidence type="ECO:0000250" key="3">
    <source>
        <dbReference type="UniProtKB" id="Q93V58"/>
    </source>
</evidence>
<evidence type="ECO:0000255" key="4">
    <source>
        <dbReference type="PROSITE-ProRule" id="PRU00159"/>
    </source>
</evidence>
<evidence type="ECO:0000255" key="5">
    <source>
        <dbReference type="PROSITE-ProRule" id="PRU00256"/>
    </source>
</evidence>
<evidence type="ECO:0000255" key="6">
    <source>
        <dbReference type="PROSITE-ProRule" id="PRU10027"/>
    </source>
</evidence>
<evidence type="ECO:0000256" key="7">
    <source>
        <dbReference type="SAM" id="MobiDB-lite"/>
    </source>
</evidence>
<evidence type="ECO:0000269" key="8">
    <source>
    </source>
</evidence>
<evidence type="ECO:0000269" key="9">
    <source>
    </source>
</evidence>
<evidence type="ECO:0000269" key="10">
    <source>
    </source>
</evidence>
<evidence type="ECO:0000269" key="11">
    <source>
    </source>
</evidence>
<evidence type="ECO:0000269" key="12">
    <source>
    </source>
</evidence>
<evidence type="ECO:0000269" key="13">
    <source>
    </source>
</evidence>
<evidence type="ECO:0000269" key="14">
    <source>
    </source>
</evidence>
<evidence type="ECO:0000305" key="15"/>
<evidence type="ECO:0007829" key="16">
    <source>
        <dbReference type="PDB" id="4CZU"/>
    </source>
</evidence>